<proteinExistence type="inferred from homology"/>
<accession>B2FQ21</accession>
<gene>
    <name evidence="1" type="primary">pth</name>
    <name type="ordered locus">Smlt0877</name>
</gene>
<reference key="1">
    <citation type="journal article" date="2008" name="Genome Biol.">
        <title>The complete genome, comparative and functional analysis of Stenotrophomonas maltophilia reveals an organism heavily shielded by drug resistance determinants.</title>
        <authorList>
            <person name="Crossman L.C."/>
            <person name="Gould V.C."/>
            <person name="Dow J.M."/>
            <person name="Vernikos G.S."/>
            <person name="Okazaki A."/>
            <person name="Sebaihia M."/>
            <person name="Saunders D."/>
            <person name="Arrowsmith C."/>
            <person name="Carver T."/>
            <person name="Peters N."/>
            <person name="Adlem E."/>
            <person name="Kerhornou A."/>
            <person name="Lord A."/>
            <person name="Murphy L."/>
            <person name="Seeger K."/>
            <person name="Squares R."/>
            <person name="Rutter S."/>
            <person name="Quail M.A."/>
            <person name="Rajandream M.A."/>
            <person name="Harris D."/>
            <person name="Churcher C."/>
            <person name="Bentley S.D."/>
            <person name="Parkhill J."/>
            <person name="Thomson N.R."/>
            <person name="Avison M.B."/>
        </authorList>
    </citation>
    <scope>NUCLEOTIDE SEQUENCE [LARGE SCALE GENOMIC DNA]</scope>
    <source>
        <strain>K279a</strain>
    </source>
</reference>
<protein>
    <recommendedName>
        <fullName evidence="1">Peptidyl-tRNA hydrolase</fullName>
        <shortName evidence="1">Pth</shortName>
        <ecNumber evidence="1">3.1.1.29</ecNumber>
    </recommendedName>
</protein>
<organism>
    <name type="scientific">Stenotrophomonas maltophilia (strain K279a)</name>
    <dbReference type="NCBI Taxonomy" id="522373"/>
    <lineage>
        <taxon>Bacteria</taxon>
        <taxon>Pseudomonadati</taxon>
        <taxon>Pseudomonadota</taxon>
        <taxon>Gammaproteobacteria</taxon>
        <taxon>Lysobacterales</taxon>
        <taxon>Lysobacteraceae</taxon>
        <taxon>Stenotrophomonas</taxon>
        <taxon>Stenotrophomonas maltophilia group</taxon>
    </lineage>
</organism>
<keyword id="KW-0963">Cytoplasm</keyword>
<keyword id="KW-0378">Hydrolase</keyword>
<keyword id="KW-1185">Reference proteome</keyword>
<keyword id="KW-0694">RNA-binding</keyword>
<keyword id="KW-0820">tRNA-binding</keyword>
<sequence>MAGLRLIVGLGNPGSEHARTRHNAGFHFVEALAEKAGARWNVDSKLFGETAKVEIAGQTVWLLKPATFMNLSGKSVTAAQRFWKIEPEETLLAHDELDLAPGVARLKFDGGHGGQNGLRDTIRLLGHGKFHRLRVGIGHPGHKDRVVGWVLGRPSKEDDVLIARAIDDAIDVMPLAVQGDFSEAMKRLHTPK</sequence>
<comment type="function">
    <text evidence="1">Hydrolyzes ribosome-free peptidyl-tRNAs (with 1 or more amino acids incorporated), which drop off the ribosome during protein synthesis, or as a result of ribosome stalling.</text>
</comment>
<comment type="function">
    <text evidence="1">Catalyzes the release of premature peptidyl moieties from peptidyl-tRNA molecules trapped in stalled 50S ribosomal subunits, and thus maintains levels of free tRNAs and 50S ribosomes.</text>
</comment>
<comment type="catalytic activity">
    <reaction evidence="1">
        <text>an N-acyl-L-alpha-aminoacyl-tRNA + H2O = an N-acyl-L-amino acid + a tRNA + H(+)</text>
        <dbReference type="Rhea" id="RHEA:54448"/>
        <dbReference type="Rhea" id="RHEA-COMP:10123"/>
        <dbReference type="Rhea" id="RHEA-COMP:13883"/>
        <dbReference type="ChEBI" id="CHEBI:15377"/>
        <dbReference type="ChEBI" id="CHEBI:15378"/>
        <dbReference type="ChEBI" id="CHEBI:59874"/>
        <dbReference type="ChEBI" id="CHEBI:78442"/>
        <dbReference type="ChEBI" id="CHEBI:138191"/>
        <dbReference type="EC" id="3.1.1.29"/>
    </reaction>
</comment>
<comment type="subunit">
    <text evidence="1">Monomer.</text>
</comment>
<comment type="subcellular location">
    <subcellularLocation>
        <location evidence="1">Cytoplasm</location>
    </subcellularLocation>
</comment>
<comment type="similarity">
    <text evidence="1">Belongs to the PTH family.</text>
</comment>
<feature type="chain" id="PRO_1000092990" description="Peptidyl-tRNA hydrolase">
    <location>
        <begin position="1"/>
        <end position="192"/>
    </location>
</feature>
<feature type="active site" description="Proton acceptor" evidence="1">
    <location>
        <position position="22"/>
    </location>
</feature>
<feature type="binding site" evidence="1">
    <location>
        <position position="17"/>
    </location>
    <ligand>
        <name>tRNA</name>
        <dbReference type="ChEBI" id="CHEBI:17843"/>
    </ligand>
</feature>
<feature type="binding site" evidence="1">
    <location>
        <position position="68"/>
    </location>
    <ligand>
        <name>tRNA</name>
        <dbReference type="ChEBI" id="CHEBI:17843"/>
    </ligand>
</feature>
<feature type="binding site" evidence="1">
    <location>
        <position position="70"/>
    </location>
    <ligand>
        <name>tRNA</name>
        <dbReference type="ChEBI" id="CHEBI:17843"/>
    </ligand>
</feature>
<feature type="binding site" evidence="1">
    <location>
        <position position="116"/>
    </location>
    <ligand>
        <name>tRNA</name>
        <dbReference type="ChEBI" id="CHEBI:17843"/>
    </ligand>
</feature>
<feature type="site" description="Discriminates between blocked and unblocked aminoacyl-tRNA" evidence="1">
    <location>
        <position position="12"/>
    </location>
</feature>
<feature type="site" description="Stabilizes the basic form of H active site to accept a proton" evidence="1">
    <location>
        <position position="95"/>
    </location>
</feature>
<evidence type="ECO:0000255" key="1">
    <source>
        <dbReference type="HAMAP-Rule" id="MF_00083"/>
    </source>
</evidence>
<name>PTH_STRMK</name>
<dbReference type="EC" id="3.1.1.29" evidence="1"/>
<dbReference type="EMBL" id="AM743169">
    <property type="protein sequence ID" value="CAQ44451.1"/>
    <property type="molecule type" value="Genomic_DNA"/>
</dbReference>
<dbReference type="RefSeq" id="WP_005408192.1">
    <property type="nucleotide sequence ID" value="NC_010943.1"/>
</dbReference>
<dbReference type="SMR" id="B2FQ21"/>
<dbReference type="EnsemblBacteria" id="CAQ44451">
    <property type="protein sequence ID" value="CAQ44451"/>
    <property type="gene ID" value="Smlt0877"/>
</dbReference>
<dbReference type="GeneID" id="93831908"/>
<dbReference type="KEGG" id="sml:Smlt0877"/>
<dbReference type="eggNOG" id="COG0193">
    <property type="taxonomic scope" value="Bacteria"/>
</dbReference>
<dbReference type="HOGENOM" id="CLU_062456_3_1_6"/>
<dbReference type="Proteomes" id="UP000008840">
    <property type="component" value="Chromosome"/>
</dbReference>
<dbReference type="GO" id="GO:0005737">
    <property type="term" value="C:cytoplasm"/>
    <property type="evidence" value="ECO:0007669"/>
    <property type="project" value="UniProtKB-SubCell"/>
</dbReference>
<dbReference type="GO" id="GO:0004045">
    <property type="term" value="F:peptidyl-tRNA hydrolase activity"/>
    <property type="evidence" value="ECO:0007669"/>
    <property type="project" value="UniProtKB-UniRule"/>
</dbReference>
<dbReference type="GO" id="GO:0000049">
    <property type="term" value="F:tRNA binding"/>
    <property type="evidence" value="ECO:0007669"/>
    <property type="project" value="UniProtKB-UniRule"/>
</dbReference>
<dbReference type="GO" id="GO:0006515">
    <property type="term" value="P:protein quality control for misfolded or incompletely synthesized proteins"/>
    <property type="evidence" value="ECO:0007669"/>
    <property type="project" value="UniProtKB-UniRule"/>
</dbReference>
<dbReference type="GO" id="GO:0072344">
    <property type="term" value="P:rescue of stalled ribosome"/>
    <property type="evidence" value="ECO:0007669"/>
    <property type="project" value="UniProtKB-UniRule"/>
</dbReference>
<dbReference type="CDD" id="cd00462">
    <property type="entry name" value="PTH"/>
    <property type="match status" value="1"/>
</dbReference>
<dbReference type="FunFam" id="3.40.50.1470:FF:000001">
    <property type="entry name" value="Peptidyl-tRNA hydrolase"/>
    <property type="match status" value="1"/>
</dbReference>
<dbReference type="Gene3D" id="3.40.50.1470">
    <property type="entry name" value="Peptidyl-tRNA hydrolase"/>
    <property type="match status" value="1"/>
</dbReference>
<dbReference type="HAMAP" id="MF_00083">
    <property type="entry name" value="Pept_tRNA_hydro_bact"/>
    <property type="match status" value="1"/>
</dbReference>
<dbReference type="InterPro" id="IPR001328">
    <property type="entry name" value="Pept_tRNA_hydro"/>
</dbReference>
<dbReference type="InterPro" id="IPR018171">
    <property type="entry name" value="Pept_tRNA_hydro_CS"/>
</dbReference>
<dbReference type="InterPro" id="IPR036416">
    <property type="entry name" value="Pept_tRNA_hydro_sf"/>
</dbReference>
<dbReference type="NCBIfam" id="TIGR00447">
    <property type="entry name" value="pth"/>
    <property type="match status" value="1"/>
</dbReference>
<dbReference type="PANTHER" id="PTHR17224">
    <property type="entry name" value="PEPTIDYL-TRNA HYDROLASE"/>
    <property type="match status" value="1"/>
</dbReference>
<dbReference type="PANTHER" id="PTHR17224:SF1">
    <property type="entry name" value="PEPTIDYL-TRNA HYDROLASE"/>
    <property type="match status" value="1"/>
</dbReference>
<dbReference type="Pfam" id="PF01195">
    <property type="entry name" value="Pept_tRNA_hydro"/>
    <property type="match status" value="1"/>
</dbReference>
<dbReference type="SUPFAM" id="SSF53178">
    <property type="entry name" value="Peptidyl-tRNA hydrolase-like"/>
    <property type="match status" value="1"/>
</dbReference>
<dbReference type="PROSITE" id="PS01195">
    <property type="entry name" value="PEPT_TRNA_HYDROL_1"/>
    <property type="match status" value="1"/>
</dbReference>